<gene>
    <name evidence="1" type="primary">hemF</name>
    <name type="ordered locus">CBU_1729</name>
</gene>
<comment type="function">
    <text evidence="1">Involved in the heme biosynthesis. Catalyzes the aerobic oxidative decarboxylation of propionate groups of rings A and B of coproporphyrinogen-III to yield the vinyl groups in protoporphyrinogen-IX.</text>
</comment>
<comment type="catalytic activity">
    <reaction evidence="1">
        <text>coproporphyrinogen III + O2 + 2 H(+) = protoporphyrinogen IX + 2 CO2 + 2 H2O</text>
        <dbReference type="Rhea" id="RHEA:18257"/>
        <dbReference type="ChEBI" id="CHEBI:15377"/>
        <dbReference type="ChEBI" id="CHEBI:15378"/>
        <dbReference type="ChEBI" id="CHEBI:15379"/>
        <dbReference type="ChEBI" id="CHEBI:16526"/>
        <dbReference type="ChEBI" id="CHEBI:57307"/>
        <dbReference type="ChEBI" id="CHEBI:57309"/>
        <dbReference type="EC" id="1.3.3.3"/>
    </reaction>
</comment>
<comment type="cofactor">
    <cofactor evidence="1">
        <name>a divalent metal cation</name>
        <dbReference type="ChEBI" id="CHEBI:60240"/>
    </cofactor>
</comment>
<comment type="pathway">
    <text evidence="1">Porphyrin-containing compound metabolism; protoporphyrin-IX biosynthesis; protoporphyrinogen-IX from coproporphyrinogen-III (O2 route): step 1/1.</text>
</comment>
<comment type="subunit">
    <text evidence="1">Homodimer.</text>
</comment>
<comment type="subcellular location">
    <subcellularLocation>
        <location evidence="1">Cytoplasm</location>
    </subcellularLocation>
</comment>
<comment type="similarity">
    <text evidence="1">Belongs to the aerobic coproporphyrinogen-III oxidase family.</text>
</comment>
<comment type="sequence caution" evidence="2">
    <conflict type="erroneous initiation">
        <sequence resource="EMBL-CDS" id="AAO91224"/>
    </conflict>
    <text>Extended N-terminus.</text>
</comment>
<accession>Q83AZ6</accession>
<feature type="chain" id="PRO_0000109893" description="Oxygen-dependent coproporphyrinogen-III oxidase">
    <location>
        <begin position="1"/>
        <end position="310"/>
    </location>
</feature>
<feature type="region of interest" description="Important for dimerization" evidence="1">
    <location>
        <begin position="245"/>
        <end position="280"/>
    </location>
</feature>
<feature type="active site" description="Proton donor" evidence="1">
    <location>
        <position position="111"/>
    </location>
</feature>
<feature type="binding site" evidence="1">
    <location>
        <position position="97"/>
    </location>
    <ligand>
        <name>substrate</name>
    </ligand>
</feature>
<feature type="binding site" evidence="1">
    <location>
        <position position="101"/>
    </location>
    <ligand>
        <name>a divalent metal cation</name>
        <dbReference type="ChEBI" id="CHEBI:60240"/>
    </ligand>
</feature>
<feature type="binding site" evidence="1">
    <location>
        <position position="111"/>
    </location>
    <ligand>
        <name>a divalent metal cation</name>
        <dbReference type="ChEBI" id="CHEBI:60240"/>
    </ligand>
</feature>
<feature type="binding site" evidence="1">
    <location>
        <begin position="113"/>
        <end position="115"/>
    </location>
    <ligand>
        <name>substrate</name>
    </ligand>
</feature>
<feature type="binding site" evidence="1">
    <location>
        <position position="150"/>
    </location>
    <ligand>
        <name>a divalent metal cation</name>
        <dbReference type="ChEBI" id="CHEBI:60240"/>
    </ligand>
</feature>
<feature type="binding site" evidence="1">
    <location>
        <position position="180"/>
    </location>
    <ligand>
        <name>a divalent metal cation</name>
        <dbReference type="ChEBI" id="CHEBI:60240"/>
    </ligand>
</feature>
<feature type="binding site" evidence="1">
    <location>
        <begin position="263"/>
        <end position="265"/>
    </location>
    <ligand>
        <name>substrate</name>
    </ligand>
</feature>
<feature type="site" description="Important for dimerization" evidence="1">
    <location>
        <position position="180"/>
    </location>
</feature>
<sequence length="310" mass="36452">MRKDRQNKITEVGIYLKDLQNRLCRAFEKEEGESRFQETLWEKPNGGGGRTRLLTEGHVIEQGGVNFSCVYGNQLPPAATQKHPEISGFAFQAEGLSLVIHPRNPYVPTVHANFRFFIAGKDEADPRWWFGGGYDLTPYYGFEEDCRHWHRVAKKACDRFGEAIYPRFKAACDDYFYLKHRNEPRGIGGLFFDDLNEWEFKRCFEFIKILGDSFLEAYLPIMQNRKNHPYGERQREFQLYRRGRYVEFNLLYDRGTRFGLEFGGRTESILMSLPPRVVWRPNWEPEPGSEEARLYEDYLVRRNWVSVSGA</sequence>
<evidence type="ECO:0000255" key="1">
    <source>
        <dbReference type="HAMAP-Rule" id="MF_00333"/>
    </source>
</evidence>
<evidence type="ECO:0000305" key="2"/>
<proteinExistence type="inferred from homology"/>
<reference key="1">
    <citation type="journal article" date="2003" name="Proc. Natl. Acad. Sci. U.S.A.">
        <title>Complete genome sequence of the Q-fever pathogen, Coxiella burnetii.</title>
        <authorList>
            <person name="Seshadri R."/>
            <person name="Paulsen I.T."/>
            <person name="Eisen J.A."/>
            <person name="Read T.D."/>
            <person name="Nelson K.E."/>
            <person name="Nelson W.C."/>
            <person name="Ward N.L."/>
            <person name="Tettelin H."/>
            <person name="Davidsen T.M."/>
            <person name="Beanan M.J."/>
            <person name="DeBoy R.T."/>
            <person name="Daugherty S.C."/>
            <person name="Brinkac L.M."/>
            <person name="Madupu R."/>
            <person name="Dodson R.J."/>
            <person name="Khouri H.M."/>
            <person name="Lee K.H."/>
            <person name="Carty H.A."/>
            <person name="Scanlan D."/>
            <person name="Heinzen R.A."/>
            <person name="Thompson H.A."/>
            <person name="Samuel J.E."/>
            <person name="Fraser C.M."/>
            <person name="Heidelberg J.F."/>
        </authorList>
    </citation>
    <scope>NUCLEOTIDE SEQUENCE [LARGE SCALE GENOMIC DNA]</scope>
    <source>
        <strain>RSA 493 / Nine Mile phase I</strain>
    </source>
</reference>
<name>HEM6_COXBU</name>
<dbReference type="EC" id="1.3.3.3" evidence="1"/>
<dbReference type="EMBL" id="AE016828">
    <property type="protein sequence ID" value="AAO91224.2"/>
    <property type="status" value="ALT_INIT"/>
    <property type="molecule type" value="Genomic_DNA"/>
</dbReference>
<dbReference type="RefSeq" id="NP_820710.2">
    <property type="nucleotide sequence ID" value="NC_002971.3"/>
</dbReference>
<dbReference type="SMR" id="Q83AZ6"/>
<dbReference type="STRING" id="227377.CBU_1729"/>
<dbReference type="EnsemblBacteria" id="AAO91224">
    <property type="protein sequence ID" value="AAO91224"/>
    <property type="gene ID" value="CBU_1729"/>
</dbReference>
<dbReference type="GeneID" id="1209640"/>
<dbReference type="KEGG" id="cbu:CBU_1729"/>
<dbReference type="PATRIC" id="fig|227377.7.peg.1716"/>
<dbReference type="eggNOG" id="COG0408">
    <property type="taxonomic scope" value="Bacteria"/>
</dbReference>
<dbReference type="HOGENOM" id="CLU_026169_0_1_6"/>
<dbReference type="OrthoDB" id="9777553at2"/>
<dbReference type="UniPathway" id="UPA00251">
    <property type="reaction ID" value="UER00322"/>
</dbReference>
<dbReference type="Proteomes" id="UP000002671">
    <property type="component" value="Chromosome"/>
</dbReference>
<dbReference type="GO" id="GO:0005737">
    <property type="term" value="C:cytoplasm"/>
    <property type="evidence" value="ECO:0000318"/>
    <property type="project" value="GO_Central"/>
</dbReference>
<dbReference type="GO" id="GO:0004109">
    <property type="term" value="F:coproporphyrinogen oxidase activity"/>
    <property type="evidence" value="ECO:0000318"/>
    <property type="project" value="GO_Central"/>
</dbReference>
<dbReference type="GO" id="GO:0046872">
    <property type="term" value="F:metal ion binding"/>
    <property type="evidence" value="ECO:0007669"/>
    <property type="project" value="UniProtKB-KW"/>
</dbReference>
<dbReference type="GO" id="GO:0042803">
    <property type="term" value="F:protein homodimerization activity"/>
    <property type="evidence" value="ECO:0000250"/>
    <property type="project" value="UniProtKB"/>
</dbReference>
<dbReference type="GO" id="GO:0006782">
    <property type="term" value="P:protoporphyrinogen IX biosynthetic process"/>
    <property type="evidence" value="ECO:0000318"/>
    <property type="project" value="GO_Central"/>
</dbReference>
<dbReference type="FunFam" id="3.40.1500.10:FF:000012">
    <property type="entry name" value="Oxygen-dependent coproporphyrinogen-III oxidase"/>
    <property type="match status" value="1"/>
</dbReference>
<dbReference type="Gene3D" id="3.40.1500.10">
    <property type="entry name" value="Coproporphyrinogen III oxidase, aerobic"/>
    <property type="match status" value="1"/>
</dbReference>
<dbReference type="HAMAP" id="MF_00333">
    <property type="entry name" value="Coprogen_oxidas"/>
    <property type="match status" value="1"/>
</dbReference>
<dbReference type="InterPro" id="IPR001260">
    <property type="entry name" value="Coprogen_oxidase_aer"/>
</dbReference>
<dbReference type="InterPro" id="IPR036406">
    <property type="entry name" value="Coprogen_oxidase_aer_sf"/>
</dbReference>
<dbReference type="InterPro" id="IPR018375">
    <property type="entry name" value="Coprogen_oxidase_CS"/>
</dbReference>
<dbReference type="NCBIfam" id="NF003727">
    <property type="entry name" value="PRK05330.1"/>
    <property type="match status" value="1"/>
</dbReference>
<dbReference type="PANTHER" id="PTHR10755">
    <property type="entry name" value="COPROPORPHYRINOGEN III OXIDASE, MITOCHONDRIAL"/>
    <property type="match status" value="1"/>
</dbReference>
<dbReference type="PANTHER" id="PTHR10755:SF0">
    <property type="entry name" value="OXYGEN-DEPENDENT COPROPORPHYRINOGEN-III OXIDASE, MITOCHONDRIAL"/>
    <property type="match status" value="1"/>
</dbReference>
<dbReference type="Pfam" id="PF01218">
    <property type="entry name" value="Coprogen_oxidas"/>
    <property type="match status" value="1"/>
</dbReference>
<dbReference type="PIRSF" id="PIRSF000166">
    <property type="entry name" value="Coproporphyri_ox"/>
    <property type="match status" value="1"/>
</dbReference>
<dbReference type="PRINTS" id="PR00073">
    <property type="entry name" value="COPRGNOXDASE"/>
</dbReference>
<dbReference type="SUPFAM" id="SSF102886">
    <property type="entry name" value="Coproporphyrinogen III oxidase"/>
    <property type="match status" value="1"/>
</dbReference>
<dbReference type="PROSITE" id="PS01021">
    <property type="entry name" value="COPROGEN_OXIDASE"/>
    <property type="match status" value="1"/>
</dbReference>
<keyword id="KW-0963">Cytoplasm</keyword>
<keyword id="KW-0350">Heme biosynthesis</keyword>
<keyword id="KW-0479">Metal-binding</keyword>
<keyword id="KW-0560">Oxidoreductase</keyword>
<keyword id="KW-0627">Porphyrin biosynthesis</keyword>
<keyword id="KW-1185">Reference proteome</keyword>
<protein>
    <recommendedName>
        <fullName evidence="1">Oxygen-dependent coproporphyrinogen-III oxidase</fullName>
        <shortName evidence="1">CPO</shortName>
        <shortName evidence="1">Coprogen oxidase</shortName>
        <shortName evidence="1">Coproporphyrinogenase</shortName>
        <ecNumber evidence="1">1.3.3.3</ecNumber>
    </recommendedName>
</protein>
<organism>
    <name type="scientific">Coxiella burnetii (strain RSA 493 / Nine Mile phase I)</name>
    <dbReference type="NCBI Taxonomy" id="227377"/>
    <lineage>
        <taxon>Bacteria</taxon>
        <taxon>Pseudomonadati</taxon>
        <taxon>Pseudomonadota</taxon>
        <taxon>Gammaproteobacteria</taxon>
        <taxon>Legionellales</taxon>
        <taxon>Coxiellaceae</taxon>
        <taxon>Coxiella</taxon>
    </lineage>
</organism>